<evidence type="ECO:0000255" key="1">
    <source>
        <dbReference type="HAMAP-Rule" id="MF_00860"/>
    </source>
</evidence>
<name>RBS_MALSP</name>
<comment type="function">
    <text evidence="1">RuBisCO catalyzes two reactions: the carboxylation of D-ribulose 1,5-bisphosphate, the primary event in carbon dioxide fixation, as well as the oxidative fragmentation of the pentose substrate. Both reactions occur simultaneously and in competition at the same active site. Although the small subunit is not catalytic it is essential for maximal activity.</text>
</comment>
<comment type="subunit">
    <text evidence="1">Heterohexadecamer of 8 large and 8 small subunits.</text>
</comment>
<comment type="subcellular location">
    <subcellularLocation>
        <location evidence="1">Plastid</location>
        <location evidence="1">Chloroplast</location>
    </subcellularLocation>
</comment>
<comment type="miscellaneous">
    <text evidence="1">The basic functional RuBisCO is composed of a large chain homodimer in a 'head-to-tail' conformation. In form I RuBisCO this homodimer is arranged in a barrel-like tetramer with the small subunits forming a tetrameric 'cap' on each end of the 'barrel'.</text>
</comment>
<comment type="similarity">
    <text evidence="1">Belongs to the RuBisCO small chain family.</text>
</comment>
<proteinExistence type="evidence at transcript level"/>
<feature type="transit peptide" description="Chloroplast" evidence="1">
    <location>
        <begin position="1"/>
        <end position="59"/>
    </location>
</feature>
<feature type="chain" id="PRO_0000031523" description="Ribulose bisphosphate carboxylase small subunit, chloroplastic" evidence="1">
    <location>
        <begin position="60"/>
        <end position="183"/>
    </location>
</feature>
<organism>
    <name type="scientific">Malus sp.</name>
    <name type="common">Crab apple</name>
    <dbReference type="NCBI Taxonomy" id="3751"/>
    <lineage>
        <taxon>Eukaryota</taxon>
        <taxon>Viridiplantae</taxon>
        <taxon>Streptophyta</taxon>
        <taxon>Embryophyta</taxon>
        <taxon>Tracheophyta</taxon>
        <taxon>Spermatophyta</taxon>
        <taxon>Magnoliopsida</taxon>
        <taxon>eudicotyledons</taxon>
        <taxon>Gunneridae</taxon>
        <taxon>Pentapetalae</taxon>
        <taxon>rosids</taxon>
        <taxon>fabids</taxon>
        <taxon>Rosales</taxon>
        <taxon>Rosaceae</taxon>
        <taxon>Amygdaloideae</taxon>
        <taxon>Maleae</taxon>
        <taxon>Malus</taxon>
    </lineage>
</organism>
<sequence>MASSMISSGTVATVSADRPAPAQARMVAPFTGLKSSSASPVTRKSNDITSIASNGGRVQCMQVWPPLGLKKFETLSYLPPLSTESLAKEVDYLLRKNWVPCLEFELEHGFVYRENHRSPGYYDGRYWTMWKLPMFGCTDSSQVLKELEEAKKAYPQSFIRIIGFDNVRQVQCISFIAYKPAGF</sequence>
<reference key="1">
    <citation type="journal article" date="1993" name="Plant Physiol.">
        <title>Nucleotide sequence of a cDNA clone encoding the precursor of ribulose-1,5-bisphosphate carboxylase small subunit from Malus.</title>
        <authorList>
            <person name="Davies K.M."/>
        </authorList>
    </citation>
    <scope>NUCLEOTIDE SEQUENCE [MRNA]</scope>
    <source>
        <tissue>Leaf</tissue>
    </source>
</reference>
<dbReference type="EMBL" id="X65494">
    <property type="protein sequence ID" value="CAA46475.1"/>
    <property type="molecule type" value="mRNA"/>
</dbReference>
<dbReference type="PIR" id="JQ2241">
    <property type="entry name" value="JQ2241"/>
</dbReference>
<dbReference type="SMR" id="Q02980"/>
<dbReference type="GO" id="GO:0009507">
    <property type="term" value="C:chloroplast"/>
    <property type="evidence" value="ECO:0007669"/>
    <property type="project" value="UniProtKB-SubCell"/>
</dbReference>
<dbReference type="GO" id="GO:0016984">
    <property type="term" value="F:ribulose-bisphosphate carboxylase activity"/>
    <property type="evidence" value="ECO:0007669"/>
    <property type="project" value="UniProtKB-UniRule"/>
</dbReference>
<dbReference type="GO" id="GO:0009853">
    <property type="term" value="P:photorespiration"/>
    <property type="evidence" value="ECO:0007669"/>
    <property type="project" value="UniProtKB-KW"/>
</dbReference>
<dbReference type="GO" id="GO:0019253">
    <property type="term" value="P:reductive pentose-phosphate cycle"/>
    <property type="evidence" value="ECO:0007669"/>
    <property type="project" value="UniProtKB-UniRule"/>
</dbReference>
<dbReference type="CDD" id="cd03527">
    <property type="entry name" value="RuBisCO_small"/>
    <property type="match status" value="1"/>
</dbReference>
<dbReference type="FunFam" id="3.30.190.10:FF:000001">
    <property type="entry name" value="Ribulose bisphosphate carboxylase small chain, chloroplastic"/>
    <property type="match status" value="1"/>
</dbReference>
<dbReference type="Gene3D" id="3.30.190.10">
    <property type="entry name" value="Ribulose bisphosphate carboxylase, small subunit"/>
    <property type="match status" value="1"/>
</dbReference>
<dbReference type="HAMAP" id="MF_00859">
    <property type="entry name" value="RuBisCO_S_bact"/>
    <property type="match status" value="1"/>
</dbReference>
<dbReference type="InterPro" id="IPR024681">
    <property type="entry name" value="RuBisCO_ssu"/>
</dbReference>
<dbReference type="InterPro" id="IPR000894">
    <property type="entry name" value="RuBisCO_ssu_dom"/>
</dbReference>
<dbReference type="InterPro" id="IPR024680">
    <property type="entry name" value="RuBisCO_ssu_N"/>
</dbReference>
<dbReference type="InterPro" id="IPR036385">
    <property type="entry name" value="RuBisCO_ssu_sf"/>
</dbReference>
<dbReference type="PANTHER" id="PTHR31262">
    <property type="entry name" value="RIBULOSE BISPHOSPHATE CARBOXYLASE SMALL CHAIN 1, CHLOROPLASTIC"/>
    <property type="match status" value="1"/>
</dbReference>
<dbReference type="PANTHER" id="PTHR31262:SF10">
    <property type="entry name" value="RIBULOSE BISPHOSPHATE CARBOXYLASE SMALL SUBUNIT 1A, CHLOROPLASTIC-RELATED"/>
    <property type="match status" value="1"/>
</dbReference>
<dbReference type="Pfam" id="PF12338">
    <property type="entry name" value="RbcS"/>
    <property type="match status" value="1"/>
</dbReference>
<dbReference type="Pfam" id="PF00101">
    <property type="entry name" value="RuBisCO_small"/>
    <property type="match status" value="1"/>
</dbReference>
<dbReference type="PRINTS" id="PR00152">
    <property type="entry name" value="RUBISCOSMALL"/>
</dbReference>
<dbReference type="SMART" id="SM00961">
    <property type="entry name" value="RuBisCO_small"/>
    <property type="match status" value="1"/>
</dbReference>
<dbReference type="SUPFAM" id="SSF55239">
    <property type="entry name" value="RuBisCO, small subunit"/>
    <property type="match status" value="1"/>
</dbReference>
<protein>
    <recommendedName>
        <fullName evidence="1">Ribulose bisphosphate carboxylase small subunit, chloroplastic</fullName>
        <shortName evidence="1">RuBisCO small subunit</shortName>
    </recommendedName>
</protein>
<gene>
    <name evidence="1" type="primary">RBCS</name>
</gene>
<keyword id="KW-0113">Calvin cycle</keyword>
<keyword id="KW-0120">Carbon dioxide fixation</keyword>
<keyword id="KW-0150">Chloroplast</keyword>
<keyword id="KW-0601">Photorespiration</keyword>
<keyword id="KW-0602">Photosynthesis</keyword>
<keyword id="KW-0934">Plastid</keyword>
<keyword id="KW-0809">Transit peptide</keyword>
<accession>Q02980</accession>